<proteinExistence type="inferred from homology"/>
<dbReference type="EC" id="2.7.4.25" evidence="1"/>
<dbReference type="EMBL" id="CP000941">
    <property type="protein sequence ID" value="ACA12507.1"/>
    <property type="molecule type" value="Genomic_DNA"/>
</dbReference>
<dbReference type="RefSeq" id="WP_004085977.1">
    <property type="nucleotide sequence ID" value="NC_010513.1"/>
</dbReference>
<dbReference type="SMR" id="B0U3S8"/>
<dbReference type="KEGG" id="xfm:Xfasm12_1598"/>
<dbReference type="HOGENOM" id="CLU_079959_2_0_6"/>
<dbReference type="GO" id="GO:0005737">
    <property type="term" value="C:cytoplasm"/>
    <property type="evidence" value="ECO:0007669"/>
    <property type="project" value="UniProtKB-SubCell"/>
</dbReference>
<dbReference type="GO" id="GO:0005524">
    <property type="term" value="F:ATP binding"/>
    <property type="evidence" value="ECO:0007669"/>
    <property type="project" value="UniProtKB-UniRule"/>
</dbReference>
<dbReference type="GO" id="GO:0036430">
    <property type="term" value="F:CMP kinase activity"/>
    <property type="evidence" value="ECO:0007669"/>
    <property type="project" value="RHEA"/>
</dbReference>
<dbReference type="GO" id="GO:0036431">
    <property type="term" value="F:dCMP kinase activity"/>
    <property type="evidence" value="ECO:0007669"/>
    <property type="project" value="RHEA"/>
</dbReference>
<dbReference type="GO" id="GO:0006220">
    <property type="term" value="P:pyrimidine nucleotide metabolic process"/>
    <property type="evidence" value="ECO:0007669"/>
    <property type="project" value="UniProtKB-UniRule"/>
</dbReference>
<dbReference type="CDD" id="cd02020">
    <property type="entry name" value="CMPK"/>
    <property type="match status" value="1"/>
</dbReference>
<dbReference type="Gene3D" id="3.40.50.300">
    <property type="entry name" value="P-loop containing nucleotide triphosphate hydrolases"/>
    <property type="match status" value="1"/>
</dbReference>
<dbReference type="HAMAP" id="MF_00238">
    <property type="entry name" value="Cytidyl_kinase_type1"/>
    <property type="match status" value="1"/>
</dbReference>
<dbReference type="InterPro" id="IPR003136">
    <property type="entry name" value="Cytidylate_kin"/>
</dbReference>
<dbReference type="InterPro" id="IPR011994">
    <property type="entry name" value="Cytidylate_kinase_dom"/>
</dbReference>
<dbReference type="InterPro" id="IPR027417">
    <property type="entry name" value="P-loop_NTPase"/>
</dbReference>
<dbReference type="NCBIfam" id="TIGR00017">
    <property type="entry name" value="cmk"/>
    <property type="match status" value="1"/>
</dbReference>
<dbReference type="Pfam" id="PF02224">
    <property type="entry name" value="Cytidylate_kin"/>
    <property type="match status" value="1"/>
</dbReference>
<dbReference type="SUPFAM" id="SSF52540">
    <property type="entry name" value="P-loop containing nucleoside triphosphate hydrolases"/>
    <property type="match status" value="1"/>
</dbReference>
<reference key="1">
    <citation type="journal article" date="2010" name="J. Bacteriol.">
        <title>Whole genome sequences of two Xylella fastidiosa strains (M12 and M23) causing almond leaf scorch disease in California.</title>
        <authorList>
            <person name="Chen J."/>
            <person name="Xie G."/>
            <person name="Han S."/>
            <person name="Chertkov O."/>
            <person name="Sims D."/>
            <person name="Civerolo E.L."/>
        </authorList>
    </citation>
    <scope>NUCLEOTIDE SEQUENCE [LARGE SCALE GENOMIC DNA]</scope>
    <source>
        <strain>M12</strain>
    </source>
</reference>
<feature type="chain" id="PRO_1000100704" description="Cytidylate kinase">
    <location>
        <begin position="1"/>
        <end position="223"/>
    </location>
</feature>
<feature type="binding site" evidence="1">
    <location>
        <begin position="12"/>
        <end position="20"/>
    </location>
    <ligand>
        <name>ATP</name>
        <dbReference type="ChEBI" id="CHEBI:30616"/>
    </ligand>
</feature>
<organism>
    <name type="scientific">Xylella fastidiosa (strain M12)</name>
    <dbReference type="NCBI Taxonomy" id="405440"/>
    <lineage>
        <taxon>Bacteria</taxon>
        <taxon>Pseudomonadati</taxon>
        <taxon>Pseudomonadota</taxon>
        <taxon>Gammaproteobacteria</taxon>
        <taxon>Lysobacterales</taxon>
        <taxon>Lysobacteraceae</taxon>
        <taxon>Xylella</taxon>
    </lineage>
</organism>
<name>KCY_XYLFM</name>
<accession>B0U3S8</accession>
<protein>
    <recommendedName>
        <fullName evidence="1">Cytidylate kinase</fullName>
        <shortName evidence="1">CK</shortName>
        <ecNumber evidence="1">2.7.4.25</ecNumber>
    </recommendedName>
    <alternativeName>
        <fullName evidence="1">Cytidine monophosphate kinase</fullName>
        <shortName evidence="1">CMP kinase</shortName>
    </alternativeName>
</protein>
<comment type="catalytic activity">
    <reaction evidence="1">
        <text>CMP + ATP = CDP + ADP</text>
        <dbReference type="Rhea" id="RHEA:11600"/>
        <dbReference type="ChEBI" id="CHEBI:30616"/>
        <dbReference type="ChEBI" id="CHEBI:58069"/>
        <dbReference type="ChEBI" id="CHEBI:60377"/>
        <dbReference type="ChEBI" id="CHEBI:456216"/>
        <dbReference type="EC" id="2.7.4.25"/>
    </reaction>
</comment>
<comment type="catalytic activity">
    <reaction evidence="1">
        <text>dCMP + ATP = dCDP + ADP</text>
        <dbReference type="Rhea" id="RHEA:25094"/>
        <dbReference type="ChEBI" id="CHEBI:30616"/>
        <dbReference type="ChEBI" id="CHEBI:57566"/>
        <dbReference type="ChEBI" id="CHEBI:58593"/>
        <dbReference type="ChEBI" id="CHEBI:456216"/>
        <dbReference type="EC" id="2.7.4.25"/>
    </reaction>
</comment>
<comment type="subcellular location">
    <subcellularLocation>
        <location evidence="1">Cytoplasm</location>
    </subcellularLocation>
</comment>
<comment type="similarity">
    <text evidence="1">Belongs to the cytidylate kinase family. Type 1 subfamily.</text>
</comment>
<keyword id="KW-0067">ATP-binding</keyword>
<keyword id="KW-0963">Cytoplasm</keyword>
<keyword id="KW-0418">Kinase</keyword>
<keyword id="KW-0547">Nucleotide-binding</keyword>
<keyword id="KW-0808">Transferase</keyword>
<gene>
    <name evidence="1" type="primary">cmk</name>
    <name type="ordered locus">Xfasm12_1598</name>
</gene>
<evidence type="ECO:0000255" key="1">
    <source>
        <dbReference type="HAMAP-Rule" id="MF_00238"/>
    </source>
</evidence>
<sequence length="223" mass="24007">MADLVPVLTIDGPSGVGKGTVSKIVAARLGWHYLDSGALYRAVAVAVDWAAVDVSDTTALVKCAFDTCVNFAECADGEMRVLVNAIDATDVLRMETTGVLASTIAAISEVRAALKERQQMFRRTPGLVADGRDMGTVIFPDAQYKVFLTAKAEERAQRRYKQLMKKGVSVMLGALLEEIRARDARDVCRSVAPLKPADDALLIDSTCMEVDEVVAQVLALVTD</sequence>